<dbReference type="EMBL" id="AP010904">
    <property type="protein sequence ID" value="BAH76611.1"/>
    <property type="molecule type" value="Genomic_DNA"/>
</dbReference>
<dbReference type="RefSeq" id="WP_006919827.1">
    <property type="nucleotide sequence ID" value="NC_012796.1"/>
</dbReference>
<dbReference type="SMR" id="C4XIP3"/>
<dbReference type="STRING" id="573370.DMR_31200"/>
<dbReference type="KEGG" id="dma:DMR_31200"/>
<dbReference type="eggNOG" id="COG0080">
    <property type="taxonomic scope" value="Bacteria"/>
</dbReference>
<dbReference type="HOGENOM" id="CLU_074237_2_1_7"/>
<dbReference type="OrthoDB" id="9802408at2"/>
<dbReference type="Proteomes" id="UP000009071">
    <property type="component" value="Chromosome"/>
</dbReference>
<dbReference type="GO" id="GO:0022625">
    <property type="term" value="C:cytosolic large ribosomal subunit"/>
    <property type="evidence" value="ECO:0007669"/>
    <property type="project" value="TreeGrafter"/>
</dbReference>
<dbReference type="GO" id="GO:0070180">
    <property type="term" value="F:large ribosomal subunit rRNA binding"/>
    <property type="evidence" value="ECO:0007669"/>
    <property type="project" value="UniProtKB-UniRule"/>
</dbReference>
<dbReference type="GO" id="GO:0003735">
    <property type="term" value="F:structural constituent of ribosome"/>
    <property type="evidence" value="ECO:0007669"/>
    <property type="project" value="InterPro"/>
</dbReference>
<dbReference type="GO" id="GO:0006412">
    <property type="term" value="P:translation"/>
    <property type="evidence" value="ECO:0007669"/>
    <property type="project" value="UniProtKB-UniRule"/>
</dbReference>
<dbReference type="CDD" id="cd00349">
    <property type="entry name" value="Ribosomal_L11"/>
    <property type="match status" value="1"/>
</dbReference>
<dbReference type="FunFam" id="1.10.10.250:FF:000001">
    <property type="entry name" value="50S ribosomal protein L11"/>
    <property type="match status" value="1"/>
</dbReference>
<dbReference type="FunFam" id="3.30.1550.10:FF:000001">
    <property type="entry name" value="50S ribosomal protein L11"/>
    <property type="match status" value="1"/>
</dbReference>
<dbReference type="Gene3D" id="1.10.10.250">
    <property type="entry name" value="Ribosomal protein L11, C-terminal domain"/>
    <property type="match status" value="1"/>
</dbReference>
<dbReference type="Gene3D" id="3.30.1550.10">
    <property type="entry name" value="Ribosomal protein L11/L12, N-terminal domain"/>
    <property type="match status" value="1"/>
</dbReference>
<dbReference type="HAMAP" id="MF_00736">
    <property type="entry name" value="Ribosomal_uL11"/>
    <property type="match status" value="1"/>
</dbReference>
<dbReference type="InterPro" id="IPR000911">
    <property type="entry name" value="Ribosomal_uL11"/>
</dbReference>
<dbReference type="InterPro" id="IPR006519">
    <property type="entry name" value="Ribosomal_uL11_bac-typ"/>
</dbReference>
<dbReference type="InterPro" id="IPR020783">
    <property type="entry name" value="Ribosomal_uL11_C"/>
</dbReference>
<dbReference type="InterPro" id="IPR036769">
    <property type="entry name" value="Ribosomal_uL11_C_sf"/>
</dbReference>
<dbReference type="InterPro" id="IPR020784">
    <property type="entry name" value="Ribosomal_uL11_N"/>
</dbReference>
<dbReference type="InterPro" id="IPR036796">
    <property type="entry name" value="Ribosomal_uL11_N_sf"/>
</dbReference>
<dbReference type="NCBIfam" id="TIGR01632">
    <property type="entry name" value="L11_bact"/>
    <property type="match status" value="1"/>
</dbReference>
<dbReference type="PANTHER" id="PTHR11661">
    <property type="entry name" value="60S RIBOSOMAL PROTEIN L12"/>
    <property type="match status" value="1"/>
</dbReference>
<dbReference type="PANTHER" id="PTHR11661:SF1">
    <property type="entry name" value="LARGE RIBOSOMAL SUBUNIT PROTEIN UL11M"/>
    <property type="match status" value="1"/>
</dbReference>
<dbReference type="Pfam" id="PF00298">
    <property type="entry name" value="Ribosomal_L11"/>
    <property type="match status" value="1"/>
</dbReference>
<dbReference type="Pfam" id="PF03946">
    <property type="entry name" value="Ribosomal_L11_N"/>
    <property type="match status" value="1"/>
</dbReference>
<dbReference type="SMART" id="SM00649">
    <property type="entry name" value="RL11"/>
    <property type="match status" value="1"/>
</dbReference>
<dbReference type="SUPFAM" id="SSF54747">
    <property type="entry name" value="Ribosomal L11/L12e N-terminal domain"/>
    <property type="match status" value="1"/>
</dbReference>
<dbReference type="SUPFAM" id="SSF46906">
    <property type="entry name" value="Ribosomal protein L11, C-terminal domain"/>
    <property type="match status" value="1"/>
</dbReference>
<accession>C4XIP3</accession>
<sequence>MAKKITAKVKLQLPAGSANPSPPVGPALGQHGVNIMEFCKAFNAKTMEQKGTIIPALITIYADRSFTFITKTPPASVLLVKAAKIDKGSGEPNKNKVGKVTAAQIEEIAKLKMVDMTAKDLEAACRTISGTARSMGIEIV</sequence>
<organism>
    <name type="scientific">Solidesulfovibrio magneticus (strain ATCC 700980 / DSM 13731 / RS-1)</name>
    <name type="common">Desulfovibrio magneticus</name>
    <dbReference type="NCBI Taxonomy" id="573370"/>
    <lineage>
        <taxon>Bacteria</taxon>
        <taxon>Pseudomonadati</taxon>
        <taxon>Thermodesulfobacteriota</taxon>
        <taxon>Desulfovibrionia</taxon>
        <taxon>Desulfovibrionales</taxon>
        <taxon>Desulfovibrionaceae</taxon>
        <taxon>Solidesulfovibrio</taxon>
    </lineage>
</organism>
<feature type="chain" id="PRO_1000212770" description="Large ribosomal subunit protein uL11">
    <location>
        <begin position="1"/>
        <end position="140"/>
    </location>
</feature>
<keyword id="KW-0488">Methylation</keyword>
<keyword id="KW-0687">Ribonucleoprotein</keyword>
<keyword id="KW-0689">Ribosomal protein</keyword>
<keyword id="KW-0694">RNA-binding</keyword>
<keyword id="KW-0699">rRNA-binding</keyword>
<proteinExistence type="inferred from homology"/>
<evidence type="ECO:0000255" key="1">
    <source>
        <dbReference type="HAMAP-Rule" id="MF_00736"/>
    </source>
</evidence>
<evidence type="ECO:0000305" key="2"/>
<name>RL11_SOLM1</name>
<protein>
    <recommendedName>
        <fullName evidence="1">Large ribosomal subunit protein uL11</fullName>
    </recommendedName>
    <alternativeName>
        <fullName evidence="2">50S ribosomal protein L11</fullName>
    </alternativeName>
</protein>
<gene>
    <name evidence="1" type="primary">rplK</name>
    <name type="ordered locus">DMR_31200</name>
</gene>
<comment type="function">
    <text evidence="1">Forms part of the ribosomal stalk which helps the ribosome interact with GTP-bound translation factors.</text>
</comment>
<comment type="subunit">
    <text evidence="1">Part of the ribosomal stalk of the 50S ribosomal subunit. Interacts with L10 and the large rRNA to form the base of the stalk. L10 forms an elongated spine to which L12 dimers bind in a sequential fashion forming a multimeric L10(L12)X complex.</text>
</comment>
<comment type="PTM">
    <text evidence="1">One or more lysine residues are methylated.</text>
</comment>
<comment type="similarity">
    <text evidence="1">Belongs to the universal ribosomal protein uL11 family.</text>
</comment>
<reference key="1">
    <citation type="journal article" date="2009" name="Genome Res.">
        <title>Whole genome sequence of Desulfovibrio magneticus strain RS-1 revealed common gene clusters in magnetotactic bacteria.</title>
        <authorList>
            <person name="Nakazawa H."/>
            <person name="Arakaki A."/>
            <person name="Narita-Yamada S."/>
            <person name="Yashiro I."/>
            <person name="Jinno K."/>
            <person name="Aoki N."/>
            <person name="Tsuruyama A."/>
            <person name="Okamura Y."/>
            <person name="Tanikawa S."/>
            <person name="Fujita N."/>
            <person name="Takeyama H."/>
            <person name="Matsunaga T."/>
        </authorList>
    </citation>
    <scope>NUCLEOTIDE SEQUENCE [LARGE SCALE GENOMIC DNA]</scope>
    <source>
        <strain>ATCC 700980 / DSM 13731 / RS-1</strain>
    </source>
</reference>